<name>ADCL3_MOUSE</name>
<comment type="subcellular location">
    <subcellularLocation>
        <location evidence="4">Membrane</location>
        <topology evidence="4">Multi-pass membrane protein</topology>
    </subcellularLocation>
</comment>
<comment type="similarity">
    <text evidence="4">Belongs to the 'GDXG' lipolytic enzyme family.</text>
</comment>
<dbReference type="EC" id="3.1.1.-"/>
<dbReference type="EMBL" id="AL607073">
    <property type="status" value="NOT_ANNOTATED_CDS"/>
    <property type="molecule type" value="Genomic_DNA"/>
</dbReference>
<dbReference type="CCDS" id="CCDS38954.1"/>
<dbReference type="RefSeq" id="NP_001078972.1">
    <property type="nucleotide sequence ID" value="NM_001085503.2"/>
</dbReference>
<dbReference type="SMR" id="A2A7Z8"/>
<dbReference type="STRING" id="10090.ENSMUSP00000101375"/>
<dbReference type="ESTHER" id="mouse-adcl3">
    <property type="family name" value="Arylacetamide_deacetylase"/>
</dbReference>
<dbReference type="GlyCosmos" id="A2A7Z8">
    <property type="glycosylation" value="1 site, No reported glycans"/>
</dbReference>
<dbReference type="GlyGen" id="A2A7Z8">
    <property type="glycosylation" value="2 sites"/>
</dbReference>
<dbReference type="iPTMnet" id="A2A7Z8"/>
<dbReference type="PhosphoSitePlus" id="A2A7Z8"/>
<dbReference type="PaxDb" id="10090-ENSMUSP00000101375"/>
<dbReference type="ProteomicsDB" id="285681"/>
<dbReference type="Antibodypedia" id="57582">
    <property type="antibodies" value="41 antibodies from 10 providers"/>
</dbReference>
<dbReference type="Ensembl" id="ENSMUST00000105749.2">
    <property type="protein sequence ID" value="ENSMUSP00000101375.2"/>
    <property type="gene ID" value="ENSMUSG00000078507.2"/>
</dbReference>
<dbReference type="GeneID" id="230883"/>
<dbReference type="KEGG" id="mmu:230883"/>
<dbReference type="UCSC" id="uc008vrg.1">
    <property type="organism name" value="mouse"/>
</dbReference>
<dbReference type="AGR" id="MGI:2685281"/>
<dbReference type="CTD" id="126767"/>
<dbReference type="MGI" id="MGI:2685281">
    <property type="gene designation" value="Aadacl3"/>
</dbReference>
<dbReference type="VEuPathDB" id="HostDB:ENSMUSG00000078507"/>
<dbReference type="eggNOG" id="KOG1515">
    <property type="taxonomic scope" value="Eukaryota"/>
</dbReference>
<dbReference type="GeneTree" id="ENSGT00940000162160"/>
<dbReference type="HOGENOM" id="CLU_012494_12_2_1"/>
<dbReference type="InParanoid" id="A2A7Z8"/>
<dbReference type="OMA" id="TLWVICS"/>
<dbReference type="OrthoDB" id="408631at2759"/>
<dbReference type="PhylomeDB" id="A2A7Z8"/>
<dbReference type="TreeFam" id="TF314978"/>
<dbReference type="BioGRID-ORCS" id="230883">
    <property type="hits" value="2 hits in 78 CRISPR screens"/>
</dbReference>
<dbReference type="PRO" id="PR:A2A7Z8"/>
<dbReference type="Proteomes" id="UP000000589">
    <property type="component" value="Chromosome 4"/>
</dbReference>
<dbReference type="RNAct" id="A2A7Z8">
    <property type="molecule type" value="protein"/>
</dbReference>
<dbReference type="Bgee" id="ENSMUSG00000078507">
    <property type="expression patterns" value="Expressed in lip and 3 other cell types or tissues"/>
</dbReference>
<dbReference type="GO" id="GO:0016020">
    <property type="term" value="C:membrane"/>
    <property type="evidence" value="ECO:0007669"/>
    <property type="project" value="UniProtKB-SubCell"/>
</dbReference>
<dbReference type="GO" id="GO:0052689">
    <property type="term" value="F:carboxylic ester hydrolase activity"/>
    <property type="evidence" value="ECO:0007669"/>
    <property type="project" value="InterPro"/>
</dbReference>
<dbReference type="Gene3D" id="3.40.50.1820">
    <property type="entry name" value="alpha/beta hydrolase"/>
    <property type="match status" value="1"/>
</dbReference>
<dbReference type="InterPro" id="IPR013094">
    <property type="entry name" value="AB_hydrolase_3"/>
</dbReference>
<dbReference type="InterPro" id="IPR029058">
    <property type="entry name" value="AB_hydrolase_fold"/>
</dbReference>
<dbReference type="InterPro" id="IPR017157">
    <property type="entry name" value="Arylacetamide_deacetylase"/>
</dbReference>
<dbReference type="InterPro" id="IPR050300">
    <property type="entry name" value="GDXG_lipolytic_enzyme"/>
</dbReference>
<dbReference type="PANTHER" id="PTHR48081">
    <property type="entry name" value="AB HYDROLASE SUPERFAMILY PROTEIN C4A8.06C"/>
    <property type="match status" value="1"/>
</dbReference>
<dbReference type="PANTHER" id="PTHR48081:SF32">
    <property type="entry name" value="ALPHA_BETA HYDROLASE FOLD-3 DOMAIN-CONTAINING PROTEIN"/>
    <property type="match status" value="1"/>
</dbReference>
<dbReference type="Pfam" id="PF07859">
    <property type="entry name" value="Abhydrolase_3"/>
    <property type="match status" value="2"/>
</dbReference>
<dbReference type="PIRSF" id="PIRSF037251">
    <property type="entry name" value="Arylacetamide_deacetylase"/>
    <property type="match status" value="1"/>
</dbReference>
<dbReference type="SUPFAM" id="SSF53474">
    <property type="entry name" value="alpha/beta-Hydrolases"/>
    <property type="match status" value="1"/>
</dbReference>
<evidence type="ECO:0000250" key="1">
    <source>
        <dbReference type="UniProtKB" id="Q5NUF3"/>
    </source>
</evidence>
<evidence type="ECO:0000250" key="2">
    <source>
        <dbReference type="UniProtKB" id="Q8BLF1"/>
    </source>
</evidence>
<evidence type="ECO:0000255" key="3"/>
<evidence type="ECO:0000305" key="4"/>
<proteinExistence type="inferred from homology"/>
<reference key="1">
    <citation type="journal article" date="2009" name="PLoS Biol.">
        <title>Lineage-specific biology revealed by a finished genome assembly of the mouse.</title>
        <authorList>
            <person name="Church D.M."/>
            <person name="Goodstadt L."/>
            <person name="Hillier L.W."/>
            <person name="Zody M.C."/>
            <person name="Goldstein S."/>
            <person name="She X."/>
            <person name="Bult C.J."/>
            <person name="Agarwala R."/>
            <person name="Cherry J.L."/>
            <person name="DiCuccio M."/>
            <person name="Hlavina W."/>
            <person name="Kapustin Y."/>
            <person name="Meric P."/>
            <person name="Maglott D."/>
            <person name="Birtle Z."/>
            <person name="Marques A.C."/>
            <person name="Graves T."/>
            <person name="Zhou S."/>
            <person name="Teague B."/>
            <person name="Potamousis K."/>
            <person name="Churas C."/>
            <person name="Place M."/>
            <person name="Herschleb J."/>
            <person name="Runnheim R."/>
            <person name="Forrest D."/>
            <person name="Amos-Landgraf J."/>
            <person name="Schwartz D.C."/>
            <person name="Cheng Z."/>
            <person name="Lindblad-Toh K."/>
            <person name="Eichler E.E."/>
            <person name="Ponting C.P."/>
        </authorList>
    </citation>
    <scope>NUCLEOTIDE SEQUENCE [LARGE SCALE GENOMIC DNA]</scope>
    <source>
        <strain>C57BL/6J</strain>
    </source>
</reference>
<gene>
    <name type="primary">Aadacl3</name>
</gene>
<organism>
    <name type="scientific">Mus musculus</name>
    <name type="common">Mouse</name>
    <dbReference type="NCBI Taxonomy" id="10090"/>
    <lineage>
        <taxon>Eukaryota</taxon>
        <taxon>Metazoa</taxon>
        <taxon>Chordata</taxon>
        <taxon>Craniata</taxon>
        <taxon>Vertebrata</taxon>
        <taxon>Euteleostomi</taxon>
        <taxon>Mammalia</taxon>
        <taxon>Eutheria</taxon>
        <taxon>Euarchontoglires</taxon>
        <taxon>Glires</taxon>
        <taxon>Rodentia</taxon>
        <taxon>Myomorpha</taxon>
        <taxon>Muroidea</taxon>
        <taxon>Muridae</taxon>
        <taxon>Murinae</taxon>
        <taxon>Mus</taxon>
        <taxon>Mus</taxon>
    </lineage>
</organism>
<protein>
    <recommendedName>
        <fullName>Arylacetamide deacetylase-like 3</fullName>
        <ecNumber>3.1.1.-</ecNumber>
    </recommendedName>
</protein>
<keyword id="KW-0325">Glycoprotein</keyword>
<keyword id="KW-0378">Hydrolase</keyword>
<keyword id="KW-0472">Membrane</keyword>
<keyword id="KW-1185">Reference proteome</keyword>
<keyword id="KW-0812">Transmembrane</keyword>
<keyword id="KW-1133">Transmembrane helix</keyword>
<sequence length="408" mass="46340">MVVLALTLLVGSVAVFSLGSLLWVVGKHFWTEHIPEGITHPWRLRILSCLFHLTMTWGMIFEKLGLCYAPQFASFLHDLKPLKRDPDVVVKDLHFGTIPVKLYKPKKPSSIPRLGIIFFHGGGTIIGSLRTHNSICLRLSKECDSVVVSVGYRKSPMYKYPVMKDDCVVATTHFLESLDVYGVDPARVVTCGDSVGGTAATVTSQMLVHRPDLPRIKAQILIYPLLQLIDFGSPSYQQNRNIPLLSWDLAFYCFCCHLDVNISWKSVVKNGMHLPPDVWEKYRKWLGAENIPERFKNRGYKSIPWGPVNNDAYQEIKRSLNYTCSPLISEDSIVSQLPETCIVSCEYDLLRDHSLLYKKRLEDLGVPVTWHHMEDGFHGVLSALDYGLLSFPCASRIMDLIIQFIRKF</sequence>
<feature type="chain" id="PRO_0000389253" description="Arylacetamide deacetylase-like 3">
    <location>
        <begin position="1"/>
        <end position="408"/>
    </location>
</feature>
<feature type="transmembrane region" description="Helical" evidence="3">
    <location>
        <begin position="2"/>
        <end position="22"/>
    </location>
</feature>
<feature type="transmembrane region" description="Helical" evidence="3">
    <location>
        <begin position="46"/>
        <end position="66"/>
    </location>
</feature>
<feature type="transmembrane region" description="Helical" evidence="3">
    <location>
        <begin position="109"/>
        <end position="129"/>
    </location>
</feature>
<feature type="short sequence motif" description="Involved in the stabilization of the negatively charged intermediate by the formation of the oxyanion hole" evidence="1">
    <location>
        <begin position="120"/>
        <end position="122"/>
    </location>
</feature>
<feature type="active site" evidence="2">
    <location>
        <position position="194"/>
    </location>
</feature>
<feature type="active site" evidence="2">
    <location>
        <position position="348"/>
    </location>
</feature>
<feature type="active site" evidence="2">
    <location>
        <position position="378"/>
    </location>
</feature>
<feature type="glycosylation site" description="N-linked (GlcNAc...) asparagine" evidence="3">
    <location>
        <position position="321"/>
    </location>
</feature>
<accession>A2A7Z8</accession>